<gene>
    <name evidence="1" type="primary">mutS</name>
    <name type="ordered locus">LACR_2519</name>
</gene>
<comment type="function">
    <text evidence="1">This protein is involved in the repair of mismatches in DNA. It is possible that it carries out the mismatch recognition step. This protein has a weak ATPase activity.</text>
</comment>
<comment type="similarity">
    <text evidence="1">Belongs to the DNA mismatch repair MutS family.</text>
</comment>
<accession>Q02VS3</accession>
<sequence length="840" mass="94209">MAEKISPGMQQYLDIKQDYPDAFLLFRMGDFYELFYEDAVNAAQILELTLTSRNKNSENPIPMAGVPHHAATEYIDKLVDLGYKVAVAEQMEDPKKAVGIVKRAVTQVITPGTTIDTANSVDNNFLVAIDFKAKRYALSYMDLSTGEFKVTELSEFSAVVGGIASLKAREIVVGFPLDEAQVKVFERQMNLLISEQFEIPENLLIELSGLTALENQAASKLLAYVKETQMRDLSHLQEVEHYEIKDFLQLDFATKSSLELTANKRENKKHGTLYWLLDETKTAMGTRMLRSWIDRPLVSNSAIQKRMEIVQVFLDHFFERSDLIEALKGVYDLERLASRVSFGKAVPVDFLQLANSLSNVPAIKNILEVLDETSLNELRSQLDEIPELSGLINSAISENASRTITEGGIIKKGYNVQLDKYREALENGTSWIAKLEADEKAKTGISTLRIDYNRKDGYYFHITQSQLNSVPEHFYRKATLKNSERFGSQELTEIEEIMLEAREKSSSLEYDLFMGLRAETEQYIGRLQALAKTIAEIDCLQSLSVVAEKQGYIRPTLTEGSRIVEIKGGRHAVVEAVMGAQEYVPNDIELPEQTDIQLITGPNMSGKSTYMRQFALTVIMAQIGSFVPAKTANLPIFDAIFTRIGASDNLISGESTFMVEMSEANHAIQKATSRSLIIFDELGRGTATYDGMALAQAIIEYVHEYIGAKTLFATHYHELTDLDKELDHLDNVHVATLEQNGNVTFLHKITDGPADKSYGIHVAKIAGLPQTLLERADLILQKLENKPLPAKKIADEQEQLSLFDFAENSSEIIEKIKGQNVDNMTAREALNFLWELKDSL</sequence>
<organism>
    <name type="scientific">Lactococcus lactis subsp. cremoris (strain SK11)</name>
    <dbReference type="NCBI Taxonomy" id="272622"/>
    <lineage>
        <taxon>Bacteria</taxon>
        <taxon>Bacillati</taxon>
        <taxon>Bacillota</taxon>
        <taxon>Bacilli</taxon>
        <taxon>Lactobacillales</taxon>
        <taxon>Streptococcaceae</taxon>
        <taxon>Lactococcus</taxon>
        <taxon>Lactococcus cremoris subsp. cremoris</taxon>
    </lineage>
</organism>
<proteinExistence type="inferred from homology"/>
<keyword id="KW-0067">ATP-binding</keyword>
<keyword id="KW-0227">DNA damage</keyword>
<keyword id="KW-0234">DNA repair</keyword>
<keyword id="KW-0238">DNA-binding</keyword>
<keyword id="KW-0547">Nucleotide-binding</keyword>
<evidence type="ECO:0000255" key="1">
    <source>
        <dbReference type="HAMAP-Rule" id="MF_00096"/>
    </source>
</evidence>
<protein>
    <recommendedName>
        <fullName evidence="1">DNA mismatch repair protein MutS</fullName>
    </recommendedName>
</protein>
<reference key="1">
    <citation type="journal article" date="2006" name="Proc. Natl. Acad. Sci. U.S.A.">
        <title>Comparative genomics of the lactic acid bacteria.</title>
        <authorList>
            <person name="Makarova K.S."/>
            <person name="Slesarev A."/>
            <person name="Wolf Y.I."/>
            <person name="Sorokin A."/>
            <person name="Mirkin B."/>
            <person name="Koonin E.V."/>
            <person name="Pavlov A."/>
            <person name="Pavlova N."/>
            <person name="Karamychev V."/>
            <person name="Polouchine N."/>
            <person name="Shakhova V."/>
            <person name="Grigoriev I."/>
            <person name="Lou Y."/>
            <person name="Rohksar D."/>
            <person name="Lucas S."/>
            <person name="Huang K."/>
            <person name="Goodstein D.M."/>
            <person name="Hawkins T."/>
            <person name="Plengvidhya V."/>
            <person name="Welker D."/>
            <person name="Hughes J."/>
            <person name="Goh Y."/>
            <person name="Benson A."/>
            <person name="Baldwin K."/>
            <person name="Lee J.-H."/>
            <person name="Diaz-Muniz I."/>
            <person name="Dosti B."/>
            <person name="Smeianov V."/>
            <person name="Wechter W."/>
            <person name="Barabote R."/>
            <person name="Lorca G."/>
            <person name="Altermann E."/>
            <person name="Barrangou R."/>
            <person name="Ganesan B."/>
            <person name="Xie Y."/>
            <person name="Rawsthorne H."/>
            <person name="Tamir D."/>
            <person name="Parker C."/>
            <person name="Breidt F."/>
            <person name="Broadbent J.R."/>
            <person name="Hutkins R."/>
            <person name="O'Sullivan D."/>
            <person name="Steele J."/>
            <person name="Unlu G."/>
            <person name="Saier M.H. Jr."/>
            <person name="Klaenhammer T."/>
            <person name="Richardson P."/>
            <person name="Kozyavkin S."/>
            <person name="Weimer B.C."/>
            <person name="Mills D.A."/>
        </authorList>
    </citation>
    <scope>NUCLEOTIDE SEQUENCE [LARGE SCALE GENOMIC DNA]</scope>
    <source>
        <strain>SK11</strain>
    </source>
</reference>
<feature type="chain" id="PRO_0000335173" description="DNA mismatch repair protein MutS">
    <location>
        <begin position="1"/>
        <end position="840"/>
    </location>
</feature>
<feature type="binding site" evidence="1">
    <location>
        <begin position="601"/>
        <end position="608"/>
    </location>
    <ligand>
        <name>ATP</name>
        <dbReference type="ChEBI" id="CHEBI:30616"/>
    </ligand>
</feature>
<name>MUTS_LACLS</name>
<dbReference type="EMBL" id="CP000425">
    <property type="protein sequence ID" value="ABJ73949.1"/>
    <property type="molecule type" value="Genomic_DNA"/>
</dbReference>
<dbReference type="RefSeq" id="WP_011677258.1">
    <property type="nucleotide sequence ID" value="NC_008527.1"/>
</dbReference>
<dbReference type="SMR" id="Q02VS3"/>
<dbReference type="KEGG" id="llc:LACR_2519"/>
<dbReference type="HOGENOM" id="CLU_002472_4_0_9"/>
<dbReference type="Proteomes" id="UP000000240">
    <property type="component" value="Chromosome"/>
</dbReference>
<dbReference type="GO" id="GO:0005829">
    <property type="term" value="C:cytosol"/>
    <property type="evidence" value="ECO:0007669"/>
    <property type="project" value="TreeGrafter"/>
</dbReference>
<dbReference type="GO" id="GO:0005524">
    <property type="term" value="F:ATP binding"/>
    <property type="evidence" value="ECO:0007669"/>
    <property type="project" value="UniProtKB-UniRule"/>
</dbReference>
<dbReference type="GO" id="GO:0140664">
    <property type="term" value="F:ATP-dependent DNA damage sensor activity"/>
    <property type="evidence" value="ECO:0007669"/>
    <property type="project" value="InterPro"/>
</dbReference>
<dbReference type="GO" id="GO:0003684">
    <property type="term" value="F:damaged DNA binding"/>
    <property type="evidence" value="ECO:0007669"/>
    <property type="project" value="UniProtKB-UniRule"/>
</dbReference>
<dbReference type="GO" id="GO:0030983">
    <property type="term" value="F:mismatched DNA binding"/>
    <property type="evidence" value="ECO:0007669"/>
    <property type="project" value="InterPro"/>
</dbReference>
<dbReference type="GO" id="GO:0006298">
    <property type="term" value="P:mismatch repair"/>
    <property type="evidence" value="ECO:0007669"/>
    <property type="project" value="UniProtKB-UniRule"/>
</dbReference>
<dbReference type="CDD" id="cd03284">
    <property type="entry name" value="ABC_MutS1"/>
    <property type="match status" value="1"/>
</dbReference>
<dbReference type="FunFam" id="1.10.1420.10:FF:000001">
    <property type="entry name" value="DNA mismatch repair protein MutS"/>
    <property type="match status" value="1"/>
</dbReference>
<dbReference type="FunFam" id="3.40.1170.10:FF:000001">
    <property type="entry name" value="DNA mismatch repair protein MutS"/>
    <property type="match status" value="1"/>
</dbReference>
<dbReference type="FunFam" id="3.40.50.300:FF:000870">
    <property type="entry name" value="MutS protein homolog 4"/>
    <property type="match status" value="1"/>
</dbReference>
<dbReference type="Gene3D" id="1.10.1420.10">
    <property type="match status" value="2"/>
</dbReference>
<dbReference type="Gene3D" id="3.40.1170.10">
    <property type="entry name" value="DNA repair protein MutS, domain I"/>
    <property type="match status" value="1"/>
</dbReference>
<dbReference type="Gene3D" id="3.30.420.110">
    <property type="entry name" value="MutS, connector domain"/>
    <property type="match status" value="1"/>
</dbReference>
<dbReference type="Gene3D" id="3.40.50.300">
    <property type="entry name" value="P-loop containing nucleotide triphosphate hydrolases"/>
    <property type="match status" value="1"/>
</dbReference>
<dbReference type="HAMAP" id="MF_00096">
    <property type="entry name" value="MutS"/>
    <property type="match status" value="1"/>
</dbReference>
<dbReference type="InterPro" id="IPR005748">
    <property type="entry name" value="DNA_mismatch_repair_MutS"/>
</dbReference>
<dbReference type="InterPro" id="IPR007695">
    <property type="entry name" value="DNA_mismatch_repair_MutS-lik_N"/>
</dbReference>
<dbReference type="InterPro" id="IPR017261">
    <property type="entry name" value="DNA_mismatch_repair_MutS/MSH"/>
</dbReference>
<dbReference type="InterPro" id="IPR000432">
    <property type="entry name" value="DNA_mismatch_repair_MutS_C"/>
</dbReference>
<dbReference type="InterPro" id="IPR007861">
    <property type="entry name" value="DNA_mismatch_repair_MutS_clamp"/>
</dbReference>
<dbReference type="InterPro" id="IPR007696">
    <property type="entry name" value="DNA_mismatch_repair_MutS_core"/>
</dbReference>
<dbReference type="InterPro" id="IPR016151">
    <property type="entry name" value="DNA_mismatch_repair_MutS_N"/>
</dbReference>
<dbReference type="InterPro" id="IPR036187">
    <property type="entry name" value="DNA_mismatch_repair_MutS_sf"/>
</dbReference>
<dbReference type="InterPro" id="IPR007860">
    <property type="entry name" value="DNA_mmatch_repair_MutS_con_dom"/>
</dbReference>
<dbReference type="InterPro" id="IPR045076">
    <property type="entry name" value="MutS"/>
</dbReference>
<dbReference type="InterPro" id="IPR036678">
    <property type="entry name" value="MutS_con_dom_sf"/>
</dbReference>
<dbReference type="InterPro" id="IPR027417">
    <property type="entry name" value="P-loop_NTPase"/>
</dbReference>
<dbReference type="NCBIfam" id="TIGR01070">
    <property type="entry name" value="mutS1"/>
    <property type="match status" value="1"/>
</dbReference>
<dbReference type="NCBIfam" id="NF003810">
    <property type="entry name" value="PRK05399.1"/>
    <property type="match status" value="1"/>
</dbReference>
<dbReference type="PANTHER" id="PTHR11361:SF34">
    <property type="entry name" value="DNA MISMATCH REPAIR PROTEIN MSH1, MITOCHONDRIAL"/>
    <property type="match status" value="1"/>
</dbReference>
<dbReference type="PANTHER" id="PTHR11361">
    <property type="entry name" value="DNA MISMATCH REPAIR PROTEIN MUTS FAMILY MEMBER"/>
    <property type="match status" value="1"/>
</dbReference>
<dbReference type="Pfam" id="PF01624">
    <property type="entry name" value="MutS_I"/>
    <property type="match status" value="1"/>
</dbReference>
<dbReference type="Pfam" id="PF05188">
    <property type="entry name" value="MutS_II"/>
    <property type="match status" value="1"/>
</dbReference>
<dbReference type="Pfam" id="PF05192">
    <property type="entry name" value="MutS_III"/>
    <property type="match status" value="1"/>
</dbReference>
<dbReference type="Pfam" id="PF05190">
    <property type="entry name" value="MutS_IV"/>
    <property type="match status" value="1"/>
</dbReference>
<dbReference type="Pfam" id="PF00488">
    <property type="entry name" value="MutS_V"/>
    <property type="match status" value="1"/>
</dbReference>
<dbReference type="PIRSF" id="PIRSF037677">
    <property type="entry name" value="DNA_mis_repair_Msh6"/>
    <property type="match status" value="1"/>
</dbReference>
<dbReference type="SMART" id="SM00534">
    <property type="entry name" value="MUTSac"/>
    <property type="match status" value="1"/>
</dbReference>
<dbReference type="SMART" id="SM00533">
    <property type="entry name" value="MUTSd"/>
    <property type="match status" value="1"/>
</dbReference>
<dbReference type="SUPFAM" id="SSF55271">
    <property type="entry name" value="DNA repair protein MutS, domain I"/>
    <property type="match status" value="1"/>
</dbReference>
<dbReference type="SUPFAM" id="SSF53150">
    <property type="entry name" value="DNA repair protein MutS, domain II"/>
    <property type="match status" value="1"/>
</dbReference>
<dbReference type="SUPFAM" id="SSF48334">
    <property type="entry name" value="DNA repair protein MutS, domain III"/>
    <property type="match status" value="1"/>
</dbReference>
<dbReference type="SUPFAM" id="SSF52540">
    <property type="entry name" value="P-loop containing nucleoside triphosphate hydrolases"/>
    <property type="match status" value="1"/>
</dbReference>
<dbReference type="PROSITE" id="PS00486">
    <property type="entry name" value="DNA_MISMATCH_REPAIR_2"/>
    <property type="match status" value="1"/>
</dbReference>